<reference key="1">
    <citation type="journal article" date="2004" name="Proc. Natl. Acad. Sci. U.S.A.">
        <title>Genomic analysis of Bacteroides fragilis reveals extensive DNA inversions regulating cell surface adaptation.</title>
        <authorList>
            <person name="Kuwahara T."/>
            <person name="Yamashita A."/>
            <person name="Hirakawa H."/>
            <person name="Nakayama H."/>
            <person name="Toh H."/>
            <person name="Okada N."/>
            <person name="Kuhara S."/>
            <person name="Hattori M."/>
            <person name="Hayashi T."/>
            <person name="Ohnishi Y."/>
        </authorList>
    </citation>
    <scope>NUCLEOTIDE SEQUENCE [LARGE SCALE GENOMIC DNA]</scope>
    <source>
        <strain>YCH46</strain>
    </source>
</reference>
<gene>
    <name evidence="1" type="primary">lipB</name>
    <name type="ordered locus">BF2034</name>
</gene>
<comment type="function">
    <text evidence="1">Catalyzes the transfer of endogenously produced octanoic acid from octanoyl-acyl-carrier-protein onto the lipoyl domains of lipoate-dependent enzymes. Lipoyl-ACP can also act as a substrate although octanoyl-ACP is likely to be the physiological substrate.</text>
</comment>
<comment type="catalytic activity">
    <reaction evidence="1">
        <text>octanoyl-[ACP] + L-lysyl-[protein] = N(6)-octanoyl-L-lysyl-[protein] + holo-[ACP] + H(+)</text>
        <dbReference type="Rhea" id="RHEA:17665"/>
        <dbReference type="Rhea" id="RHEA-COMP:9636"/>
        <dbReference type="Rhea" id="RHEA-COMP:9685"/>
        <dbReference type="Rhea" id="RHEA-COMP:9752"/>
        <dbReference type="Rhea" id="RHEA-COMP:9928"/>
        <dbReference type="ChEBI" id="CHEBI:15378"/>
        <dbReference type="ChEBI" id="CHEBI:29969"/>
        <dbReference type="ChEBI" id="CHEBI:64479"/>
        <dbReference type="ChEBI" id="CHEBI:78463"/>
        <dbReference type="ChEBI" id="CHEBI:78809"/>
        <dbReference type="EC" id="2.3.1.181"/>
    </reaction>
</comment>
<comment type="pathway">
    <text evidence="1">Protein modification; protein lipoylation via endogenous pathway; protein N(6)-(lipoyl)lysine from octanoyl-[acyl-carrier-protein]: step 1/2.</text>
</comment>
<comment type="subcellular location">
    <subcellularLocation>
        <location evidence="1">Cytoplasm</location>
    </subcellularLocation>
</comment>
<comment type="miscellaneous">
    <text evidence="1">In the reaction, the free carboxyl group of octanoic acid is attached via an amide linkage to the epsilon-amino group of a specific lysine residue of lipoyl domains of lipoate-dependent enzymes.</text>
</comment>
<comment type="similarity">
    <text evidence="1">Belongs to the LipB family.</text>
</comment>
<protein>
    <recommendedName>
        <fullName evidence="1">Octanoyltransferase</fullName>
        <ecNumber evidence="1">2.3.1.181</ecNumber>
    </recommendedName>
    <alternativeName>
        <fullName evidence="1">Lipoate-protein ligase B</fullName>
    </alternativeName>
    <alternativeName>
        <fullName evidence="1">Lipoyl/octanoyl transferase</fullName>
    </alternativeName>
    <alternativeName>
        <fullName evidence="1">Octanoyl-[acyl-carrier-protein]-protein N-octanoyltransferase</fullName>
    </alternativeName>
</protein>
<proteinExistence type="inferred from homology"/>
<feature type="chain" id="PRO_0000062809" description="Octanoyltransferase">
    <location>
        <begin position="1"/>
        <end position="221"/>
    </location>
</feature>
<feature type="domain" description="BPL/LPL catalytic" evidence="2">
    <location>
        <begin position="35"/>
        <end position="221"/>
    </location>
</feature>
<feature type="active site" description="Acyl-thioester intermediate" evidence="1">
    <location>
        <position position="183"/>
    </location>
</feature>
<feature type="binding site" evidence="1">
    <location>
        <begin position="80"/>
        <end position="87"/>
    </location>
    <ligand>
        <name>substrate</name>
    </ligand>
</feature>
<feature type="binding site" evidence="1">
    <location>
        <begin position="152"/>
        <end position="154"/>
    </location>
    <ligand>
        <name>substrate</name>
    </ligand>
</feature>
<feature type="binding site" evidence="1">
    <location>
        <begin position="165"/>
        <end position="167"/>
    </location>
    <ligand>
        <name>substrate</name>
    </ligand>
</feature>
<feature type="site" description="Lowers pKa of active site Cys" evidence="1">
    <location>
        <position position="149"/>
    </location>
</feature>
<dbReference type="EC" id="2.3.1.181" evidence="1"/>
<dbReference type="EMBL" id="AP006841">
    <property type="protein sequence ID" value="BAD48781.1"/>
    <property type="molecule type" value="Genomic_DNA"/>
</dbReference>
<dbReference type="RefSeq" id="WP_005787244.1">
    <property type="nucleotide sequence ID" value="NZ_UYXF01000010.1"/>
</dbReference>
<dbReference type="RefSeq" id="YP_099315.1">
    <property type="nucleotide sequence ID" value="NC_006347.1"/>
</dbReference>
<dbReference type="SMR" id="Q64UP8"/>
<dbReference type="STRING" id="295405.BF2034"/>
<dbReference type="KEGG" id="bfr:BF2034"/>
<dbReference type="PATRIC" id="fig|295405.11.peg.1981"/>
<dbReference type="HOGENOM" id="CLU_035168_1_3_10"/>
<dbReference type="OrthoDB" id="9787061at2"/>
<dbReference type="UniPathway" id="UPA00538">
    <property type="reaction ID" value="UER00592"/>
</dbReference>
<dbReference type="Proteomes" id="UP000002197">
    <property type="component" value="Chromosome"/>
</dbReference>
<dbReference type="GO" id="GO:0005737">
    <property type="term" value="C:cytoplasm"/>
    <property type="evidence" value="ECO:0007669"/>
    <property type="project" value="UniProtKB-SubCell"/>
</dbReference>
<dbReference type="GO" id="GO:0033819">
    <property type="term" value="F:lipoyl(octanoyl) transferase activity"/>
    <property type="evidence" value="ECO:0007669"/>
    <property type="project" value="UniProtKB-EC"/>
</dbReference>
<dbReference type="GO" id="GO:0036211">
    <property type="term" value="P:protein modification process"/>
    <property type="evidence" value="ECO:0007669"/>
    <property type="project" value="InterPro"/>
</dbReference>
<dbReference type="CDD" id="cd16444">
    <property type="entry name" value="LipB"/>
    <property type="match status" value="1"/>
</dbReference>
<dbReference type="FunFam" id="3.30.930.10:FF:000035">
    <property type="entry name" value="Putative lipoyltransferase 2, mitochondrial"/>
    <property type="match status" value="1"/>
</dbReference>
<dbReference type="Gene3D" id="3.30.930.10">
    <property type="entry name" value="Bira Bifunctional Protein, Domain 2"/>
    <property type="match status" value="1"/>
</dbReference>
<dbReference type="HAMAP" id="MF_00013">
    <property type="entry name" value="LipB"/>
    <property type="match status" value="1"/>
</dbReference>
<dbReference type="InterPro" id="IPR045864">
    <property type="entry name" value="aa-tRNA-synth_II/BPL/LPL"/>
</dbReference>
<dbReference type="InterPro" id="IPR004143">
    <property type="entry name" value="BPL_LPL_catalytic"/>
</dbReference>
<dbReference type="InterPro" id="IPR000544">
    <property type="entry name" value="Octanoyltransferase"/>
</dbReference>
<dbReference type="InterPro" id="IPR020605">
    <property type="entry name" value="Octanoyltransferase_CS"/>
</dbReference>
<dbReference type="NCBIfam" id="TIGR00214">
    <property type="entry name" value="lipB"/>
    <property type="match status" value="1"/>
</dbReference>
<dbReference type="NCBIfam" id="NF010925">
    <property type="entry name" value="PRK14345.1"/>
    <property type="match status" value="1"/>
</dbReference>
<dbReference type="PANTHER" id="PTHR10993">
    <property type="entry name" value="OCTANOYLTRANSFERASE"/>
    <property type="match status" value="1"/>
</dbReference>
<dbReference type="PANTHER" id="PTHR10993:SF12">
    <property type="entry name" value="OCTANOYLTRANSFERASE"/>
    <property type="match status" value="1"/>
</dbReference>
<dbReference type="Pfam" id="PF21948">
    <property type="entry name" value="LplA-B_cat"/>
    <property type="match status" value="1"/>
</dbReference>
<dbReference type="PIRSF" id="PIRSF016262">
    <property type="entry name" value="LPLase"/>
    <property type="match status" value="1"/>
</dbReference>
<dbReference type="SUPFAM" id="SSF55681">
    <property type="entry name" value="Class II aaRS and biotin synthetases"/>
    <property type="match status" value="1"/>
</dbReference>
<dbReference type="PROSITE" id="PS51733">
    <property type="entry name" value="BPL_LPL_CATALYTIC"/>
    <property type="match status" value="1"/>
</dbReference>
<dbReference type="PROSITE" id="PS01313">
    <property type="entry name" value="LIPB"/>
    <property type="match status" value="1"/>
</dbReference>
<sequence length="221" mass="24903">MKTITTDWELIPYSEAWSRQTEWFDALVHAKQNGESYENRIIFCEHPHVYTLGRSGKENNMLLGEEQLKTIGATLYHIDRGGDITYHGPGQLVCYPILNLEEFGLGLKEYVHLLEEAVIRVCASYGVVAGRLEKATGVWLEGDTSRARKICAIGVRSSHYVTMHGLALNVNTDLRYFSYIHPCGFIDKGVTSLQQELGRSIDMAEVKERLGRELLAALLSK</sequence>
<evidence type="ECO:0000255" key="1">
    <source>
        <dbReference type="HAMAP-Rule" id="MF_00013"/>
    </source>
</evidence>
<evidence type="ECO:0000255" key="2">
    <source>
        <dbReference type="PROSITE-ProRule" id="PRU01067"/>
    </source>
</evidence>
<accession>Q64UP8</accession>
<organism>
    <name type="scientific">Bacteroides fragilis (strain YCH46)</name>
    <dbReference type="NCBI Taxonomy" id="295405"/>
    <lineage>
        <taxon>Bacteria</taxon>
        <taxon>Pseudomonadati</taxon>
        <taxon>Bacteroidota</taxon>
        <taxon>Bacteroidia</taxon>
        <taxon>Bacteroidales</taxon>
        <taxon>Bacteroidaceae</taxon>
        <taxon>Bacteroides</taxon>
    </lineage>
</organism>
<keyword id="KW-0012">Acyltransferase</keyword>
<keyword id="KW-0963">Cytoplasm</keyword>
<keyword id="KW-0808">Transferase</keyword>
<name>LIPB_BACFR</name>